<dbReference type="EC" id="3.1.3.1" evidence="3"/>
<dbReference type="EMBL" id="AF047381">
    <property type="protein sequence ID" value="AAC04870.1"/>
    <property type="molecule type" value="Genomic_DNA"/>
</dbReference>
<dbReference type="EMBL" id="AE004091">
    <property type="protein sequence ID" value="AAG04077.1"/>
    <property type="molecule type" value="Genomic_DNA"/>
</dbReference>
<dbReference type="PIR" id="E83559">
    <property type="entry name" value="E83559"/>
</dbReference>
<dbReference type="RefSeq" id="NP_249379.1">
    <property type="nucleotide sequence ID" value="NC_002516.2"/>
</dbReference>
<dbReference type="RefSeq" id="WP_003112123.1">
    <property type="nucleotide sequence ID" value="NZ_QZGE01000025.1"/>
</dbReference>
<dbReference type="SMR" id="P35482"/>
<dbReference type="FunCoup" id="P35482">
    <property type="interactions" value="337"/>
</dbReference>
<dbReference type="IntAct" id="P35482">
    <property type="interactions" value="1"/>
</dbReference>
<dbReference type="MINT" id="P35482"/>
<dbReference type="STRING" id="208964.PA0688"/>
<dbReference type="PaxDb" id="208964-PA0688"/>
<dbReference type="GeneID" id="880790"/>
<dbReference type="KEGG" id="pae:PA0688"/>
<dbReference type="PATRIC" id="fig|208964.12.peg.720"/>
<dbReference type="PseudoCAP" id="PA0688"/>
<dbReference type="HOGENOM" id="CLU_047926_0_0_6"/>
<dbReference type="InParanoid" id="P35482"/>
<dbReference type="OrthoDB" id="9801510at2"/>
<dbReference type="PhylomeDB" id="P35482"/>
<dbReference type="BioCyc" id="PAER208964:G1FZ6-698-MONOMER"/>
<dbReference type="Proteomes" id="UP000002438">
    <property type="component" value="Chromosome"/>
</dbReference>
<dbReference type="GO" id="GO:0005576">
    <property type="term" value="C:extracellular region"/>
    <property type="evidence" value="ECO:0007669"/>
    <property type="project" value="UniProtKB-SubCell"/>
</dbReference>
<dbReference type="GO" id="GO:0042597">
    <property type="term" value="C:periplasmic space"/>
    <property type="evidence" value="ECO:0007669"/>
    <property type="project" value="UniProtKB-SubCell"/>
</dbReference>
<dbReference type="GO" id="GO:0004035">
    <property type="term" value="F:alkaline phosphatase activity"/>
    <property type="evidence" value="ECO:0007669"/>
    <property type="project" value="UniProtKB-EC"/>
</dbReference>
<dbReference type="GO" id="GO:0015628">
    <property type="term" value="P:protein secretion by the type II secretion system"/>
    <property type="evidence" value="ECO:0000314"/>
    <property type="project" value="PseudoCAP"/>
</dbReference>
<dbReference type="GO" id="GO:0043952">
    <property type="term" value="P:protein transport by the Sec complex"/>
    <property type="evidence" value="ECO:0000314"/>
    <property type="project" value="PseudoCAP"/>
</dbReference>
<dbReference type="Gene3D" id="3.40.190.10">
    <property type="entry name" value="Periplasmic binding protein-like II"/>
    <property type="match status" value="2"/>
</dbReference>
<dbReference type="InterPro" id="IPR024370">
    <property type="entry name" value="PBP_domain"/>
</dbReference>
<dbReference type="InterPro" id="IPR050962">
    <property type="entry name" value="Phosphate-bind_PstS"/>
</dbReference>
<dbReference type="PANTHER" id="PTHR42996">
    <property type="entry name" value="PHOSPHATE-BINDING PROTEIN PSTS"/>
    <property type="match status" value="1"/>
</dbReference>
<dbReference type="PANTHER" id="PTHR42996:SF1">
    <property type="entry name" value="PHOSPHATE-BINDING PROTEIN PSTS"/>
    <property type="match status" value="1"/>
</dbReference>
<dbReference type="Pfam" id="PF12849">
    <property type="entry name" value="PBP_like_2"/>
    <property type="match status" value="1"/>
</dbReference>
<dbReference type="SUPFAM" id="SSF53850">
    <property type="entry name" value="Periplasmic binding protein-like II"/>
    <property type="match status" value="1"/>
</dbReference>
<evidence type="ECO:0000269" key="1">
    <source>
    </source>
</evidence>
<evidence type="ECO:0000269" key="2">
    <source>
    </source>
</evidence>
<evidence type="ECO:0000269" key="3">
    <source>
    </source>
</evidence>
<evidence type="ECO:0000303" key="4">
    <source>
    </source>
</evidence>
<evidence type="ECO:0000303" key="5">
    <source>
    </source>
</evidence>
<evidence type="ECO:0000303" key="6">
    <source>
    </source>
</evidence>
<evidence type="ECO:0000303" key="7">
    <source ref="1"/>
</evidence>
<evidence type="ECO:0000305" key="8"/>
<gene>
    <name evidence="4" type="primary">lapA</name>
    <name evidence="7" type="synonym">phoA</name>
    <name evidence="8" type="synonym">phoA2</name>
    <name type="synonym">pstS</name>
    <name type="ordered locus">PA0688</name>
</gene>
<accession>P35482</accession>
<accession>O52768</accession>
<name>PPBL_PSEAE</name>
<organism>
    <name type="scientific">Pseudomonas aeruginosa (strain ATCC 15692 / DSM 22644 / CIP 104116 / JCM 14847 / LMG 12228 / 1C / PRS 101 / PAO1)</name>
    <dbReference type="NCBI Taxonomy" id="208964"/>
    <lineage>
        <taxon>Bacteria</taxon>
        <taxon>Pseudomonadati</taxon>
        <taxon>Pseudomonadota</taxon>
        <taxon>Gammaproteobacteria</taxon>
        <taxon>Pseudomonadales</taxon>
        <taxon>Pseudomonadaceae</taxon>
        <taxon>Pseudomonas</taxon>
    </lineage>
</organism>
<comment type="function">
    <text evidence="3">Has both a phosphomonoesterase and phosphodiesterase activity.</text>
</comment>
<comment type="catalytic activity">
    <reaction evidence="3">
        <text>a phosphate monoester + H2O = an alcohol + phosphate</text>
        <dbReference type="Rhea" id="RHEA:15017"/>
        <dbReference type="ChEBI" id="CHEBI:15377"/>
        <dbReference type="ChEBI" id="CHEBI:30879"/>
        <dbReference type="ChEBI" id="CHEBI:43474"/>
        <dbReference type="ChEBI" id="CHEBI:67140"/>
        <dbReference type="EC" id="3.1.3.1"/>
    </reaction>
</comment>
<comment type="subunit">
    <text>Homodimer.</text>
</comment>
<comment type="subcellular location">
    <subcellularLocation>
        <location evidence="1 3">Secreted</location>
    </subcellularLocation>
    <subcellularLocation>
        <location evidence="3">Periplasm</location>
    </subcellularLocation>
    <text evidence="1 3">Secreted and to some extent periplasmic (PubMed:8454193). Secretion is hxc-dependent and xcp-independent (PubMed:11985723).</text>
</comment>
<comment type="developmental stage">
    <text evidence="3">Expressed 7 hours after introduction into phosphate poor media.</text>
</comment>
<comment type="induction">
    <text evidence="2 3">Contradictory; shown to be induced in phosphate poor media (PubMed:8454193). Does not respond to decreased phosphate (PubMed:18282104).</text>
</comment>
<comment type="similarity">
    <text evidence="8">Belongs to the PstS family.</text>
</comment>
<keyword id="KW-0903">Direct protein sequencing</keyword>
<keyword id="KW-0378">Hydrolase</keyword>
<keyword id="KW-0574">Periplasm</keyword>
<keyword id="KW-1185">Reference proteome</keyword>
<keyword id="KW-0964">Secreted</keyword>
<keyword id="KW-0732">Signal</keyword>
<sequence>MFKRSLIAASLSVAALVSAQAMAVTGGGASLPAELYKGSADSILPANFSYAVTGSGTGKNAFLTNNSSLFGTTGTVHYAGSDSVLSGSELTTYNSNYNGTYGPLIQIPSVATSVTVPYRKDGNTTLNLTSAQLCDAFSGAKTTWGQLLGTTDSTPIRIVYRTGSSGTTELFTRHLNSICPTRFATNSTFTNARLPAGGTLPSNWVGVAATSTVVSTVKATNGSLGYVSPDAVNINSNAEVSRVNGNLPTQANVSTALGSVAPPANAADRADPSKWVPVFTNPSAGYSIVGYTNFVFGQCYKDASVSTDVRAFINKHYGGTTTNAAVAAHGFIPLTPAWKSAIVSAFYTGTSENLAIGNTNVCNTKGRP</sequence>
<proteinExistence type="evidence at protein level"/>
<reference key="1">
    <citation type="submission" date="1998-02" db="EMBL/GenBank/DDBJ databases">
        <title>Cloning and preliminary characterization of phoA encoding alkaline phosphatase of Pseudomonas aeruginosa.</title>
        <authorList>
            <person name="Schuermann M."/>
            <person name="Liebeton K."/>
            <person name="Jaeger K.-E."/>
        </authorList>
    </citation>
    <scope>NUCLEOTIDE SEQUENCE [GENOMIC DNA]</scope>
    <source>
        <strain>ATCC 15692 / DSM 22644 / CIP 104116 / JCM 14847 / LMG 12228 / 1C / PRS 101 / PAO1</strain>
    </source>
</reference>
<reference key="2">
    <citation type="journal article" date="2000" name="Nature">
        <title>Complete genome sequence of Pseudomonas aeruginosa PAO1, an opportunistic pathogen.</title>
        <authorList>
            <person name="Stover C.K."/>
            <person name="Pham X.-Q.T."/>
            <person name="Erwin A.L."/>
            <person name="Mizoguchi S.D."/>
            <person name="Warrener P."/>
            <person name="Hickey M.J."/>
            <person name="Brinkman F.S.L."/>
            <person name="Hufnagle W.O."/>
            <person name="Kowalik D.J."/>
            <person name="Lagrou M."/>
            <person name="Garber R.L."/>
            <person name="Goltry L."/>
            <person name="Tolentino E."/>
            <person name="Westbrock-Wadman S."/>
            <person name="Yuan Y."/>
            <person name="Brody L.L."/>
            <person name="Coulter S.N."/>
            <person name="Folger K.R."/>
            <person name="Kas A."/>
            <person name="Larbig K."/>
            <person name="Lim R.M."/>
            <person name="Smith K.A."/>
            <person name="Spencer D.H."/>
            <person name="Wong G.K.-S."/>
            <person name="Wu Z."/>
            <person name="Paulsen I.T."/>
            <person name="Reizer J."/>
            <person name="Saier M.H. Jr."/>
            <person name="Hancock R.E.W."/>
            <person name="Lory S."/>
            <person name="Olson M.V."/>
        </authorList>
    </citation>
    <scope>NUCLEOTIDE SEQUENCE [LARGE SCALE GENOMIC DNA]</scope>
    <source>
        <strain>ATCC 15692 / DSM 22644 / CIP 104116 / JCM 14847 / LMG 12228 / 1C / PRS 101 / PAO1</strain>
    </source>
</reference>
<reference key="3">
    <citation type="journal article" date="1993" name="FEMS Microbiol. Lett.">
        <title>Isolation and characterization of two immunochemically distinct alkaline phosphatases from Pseudomonas aeruginosa.</title>
        <authorList>
            <person name="Tan A.S.P."/>
            <person name="Worobec E.A."/>
        </authorList>
    </citation>
    <scope>PROTEIN SEQUENCE OF 24-37</scope>
    <scope>FUNCTION</scope>
    <scope>SUBCELLULAR LOCATION</scope>
    <scope>INDUCTION</scope>
    <source>
        <strain>H103</strain>
    </source>
</reference>
<reference key="4">
    <citation type="journal article" date="2002" name="Mol. Microbiol.">
        <title>A novel type II secretion system in Pseudomonas aeruginosa.</title>
        <authorList>
            <person name="Ball G."/>
            <person name="Durand E."/>
            <person name="Lazdunski A."/>
            <person name="Filloux A."/>
        </authorList>
    </citation>
    <scope>SUBCELLULAR LOCATION</scope>
    <source>
        <strain>ATCC 15692 / DSM 22644 / CIP 104116 / JCM 14847 / LMG 12228 / 1C / PRS 101 / PAO1</strain>
    </source>
</reference>
<reference key="5">
    <citation type="journal article" date="2008" name="PLoS Pathog.">
        <title>Structure-function aspects of PstS in multi-drug-resistant Pseudomonas aeruginosa.</title>
        <authorList>
            <person name="Zaborina O."/>
            <person name="Holbrook C."/>
            <person name="Chen Y."/>
            <person name="Long J."/>
            <person name="Zaborin A."/>
            <person name="Morozova I."/>
            <person name="Fernandez H."/>
            <person name="Wang Y."/>
            <person name="Turner J.R."/>
            <person name="Alverdy J.C."/>
        </authorList>
    </citation>
    <scope>INDUCTION</scope>
    <source>
        <strain>ATCC 15692 / DSM 22644 / CIP 104116 / JCM 14847 / LMG 12228 / 1C / PRS 101 / PAO1</strain>
    </source>
</reference>
<reference key="6">
    <citation type="journal article" date="2013" name="Acta Crystallogr. F">
        <title>Crystallization and preliminary X-ray diffraction analysis of a high-affinity phosphate-binding protein endowed with phosphatase activity from Pseudomonas aeruginosa PAO1.</title>
        <authorList>
            <person name="Djeghader A."/>
            <person name="Gotthard G."/>
            <person name="Suh A."/>
            <person name="Gonzalez D."/>
            <person name="Scott K."/>
            <person name="Chabriere E."/>
            <person name="Elias M."/>
        </authorList>
    </citation>
    <scope>CRYSTALLIZATION</scope>
    <source>
        <strain>ATCC 15692 / DSM 22644 / CIP 104116 / JCM 14847 / LMG 12228 / 1C / PRS 101 / PAO1</strain>
    </source>
</reference>
<protein>
    <recommendedName>
        <fullName evidence="6">Alkaline phosphatase L</fullName>
        <shortName>L-AP</shortName>
        <ecNumber evidence="3">3.1.3.1</ecNumber>
    </recommendedName>
    <alternativeName>
        <fullName evidence="4">Low-molecular-weight alkaline phosphatase A</fullName>
    </alternativeName>
    <alternativeName>
        <fullName evidence="5">Protein DING</fullName>
    </alternativeName>
</protein>
<feature type="signal peptide" evidence="3">
    <location>
        <begin position="1"/>
        <end position="23"/>
    </location>
</feature>
<feature type="chain" id="PRO_0000031860" description="Alkaline phosphatase L">
    <location>
        <begin position="24"/>
        <end position="368"/>
    </location>
</feature>
<feature type="sequence conflict" description="In Ref. 2." evidence="8" ref="2">
    <original>K</original>
    <variation>R</variation>
    <location>
        <position position="37"/>
    </location>
</feature>